<reference key="1">
    <citation type="submission" date="2006-10" db="EMBL/GenBank/DDBJ databases">
        <authorList>
            <person name="Fleischmann R.D."/>
            <person name="Dodson R.J."/>
            <person name="Haft D.H."/>
            <person name="Merkel J.S."/>
            <person name="Nelson W.C."/>
            <person name="Fraser C.M."/>
        </authorList>
    </citation>
    <scope>NUCLEOTIDE SEQUENCE [LARGE SCALE GENOMIC DNA]</scope>
    <source>
        <strain>ATCC 700084 / mc(2)155</strain>
    </source>
</reference>
<reference key="2">
    <citation type="journal article" date="2007" name="Genome Biol.">
        <title>Interrupted coding sequences in Mycobacterium smegmatis: authentic mutations or sequencing errors?</title>
        <authorList>
            <person name="Deshayes C."/>
            <person name="Perrodou E."/>
            <person name="Gallien S."/>
            <person name="Euphrasie D."/>
            <person name="Schaeffer C."/>
            <person name="Van-Dorsselaer A."/>
            <person name="Poch O."/>
            <person name="Lecompte O."/>
            <person name="Reyrat J.-M."/>
        </authorList>
    </citation>
    <scope>NUCLEOTIDE SEQUENCE [LARGE SCALE GENOMIC DNA]</scope>
    <source>
        <strain>ATCC 700084 / mc(2)155</strain>
    </source>
</reference>
<reference key="3">
    <citation type="journal article" date="2009" name="Genome Res.">
        <title>Ortho-proteogenomics: multiple proteomes investigation through orthology and a new MS-based protocol.</title>
        <authorList>
            <person name="Gallien S."/>
            <person name="Perrodou E."/>
            <person name="Carapito C."/>
            <person name="Deshayes C."/>
            <person name="Reyrat J.-M."/>
            <person name="Van Dorsselaer A."/>
            <person name="Poch O."/>
            <person name="Schaeffer C."/>
            <person name="Lecompte O."/>
        </authorList>
    </citation>
    <scope>NUCLEOTIDE SEQUENCE [LARGE SCALE GENOMIC DNA]</scope>
    <source>
        <strain>ATCC 700084 / mc(2)155</strain>
    </source>
</reference>
<reference key="4">
    <citation type="journal article" date="2010" name="J. Biol. Chem.">
        <title>cAMP-regulated protein lysine acetylases in mycobacteria.</title>
        <authorList>
            <person name="Nambi S."/>
            <person name="Basu N."/>
            <person name="Visweswariah S.S."/>
        </authorList>
    </citation>
    <scope>FUNCTION</scope>
    <scope>MUTAGENESIS OF ARG-95 AND GLU-234</scope>
    <scope>BIOPHYSICOCHEMICAL PROPERTIES</scope>
    <scope>SUBSTRATE SPECIFICITY</scope>
    <scope>ACTIVITY REGULATION</scope>
    <scope>DISRUPTION PHENOTYPE</scope>
    <scope>SUBUNIT</scope>
</reference>
<reference key="5">
    <citation type="journal article" date="2011" name="Biochemistry">
        <title>Reversible acetylation and inactivation of Mycobacterium tuberculosis acetyl-CoA synthetase is dependent on cAMP.</title>
        <authorList>
            <person name="Xu H."/>
            <person name="Hegde S.S."/>
            <person name="Blanchard J.S."/>
        </authorList>
    </citation>
    <scope>FUNCTION</scope>
    <scope>BIOPHYSICOCHEMICAL PROPERTIES</scope>
    <scope>ACTIVITY REGULATION</scope>
</reference>
<accession>A0R3F9</accession>
<feature type="chain" id="PRO_0000420361" description="Acetyltransferase Pat">
    <location>
        <begin position="1"/>
        <end position="333"/>
    </location>
</feature>
<feature type="domain" description="N-acetyltransferase" evidence="2">
    <location>
        <begin position="153"/>
        <end position="317"/>
    </location>
</feature>
<feature type="binding site" evidence="1">
    <location>
        <begin position="85"/>
        <end position="88"/>
    </location>
    <ligand>
        <name>3',5'-cyclic AMP</name>
        <dbReference type="ChEBI" id="CHEBI:58165"/>
        <note>allosteric activator</note>
    </ligand>
</feature>
<feature type="binding site" evidence="1">
    <location>
        <begin position="95"/>
        <end position="96"/>
    </location>
    <ligand>
        <name>3',5'-cyclic AMP</name>
        <dbReference type="ChEBI" id="CHEBI:58165"/>
        <note>allosteric activator</note>
    </ligand>
</feature>
<feature type="binding site" evidence="1">
    <location>
        <position position="135"/>
    </location>
    <ligand>
        <name>3',5'-cyclic AMP</name>
        <dbReference type="ChEBI" id="CHEBI:58165"/>
        <note>allosteric activator</note>
    </ligand>
</feature>
<feature type="binding site" evidence="1">
    <location>
        <position position="211"/>
    </location>
    <ligand>
        <name>Mg(2+)</name>
        <dbReference type="ChEBI" id="CHEBI:18420"/>
    </ligand>
</feature>
<feature type="binding site" evidence="1">
    <location>
        <begin position="237"/>
        <end position="239"/>
    </location>
    <ligand>
        <name>substrate</name>
    </ligand>
</feature>
<feature type="binding site" evidence="1">
    <location>
        <begin position="245"/>
        <end position="250"/>
    </location>
    <ligand>
        <name>substrate</name>
    </ligand>
</feature>
<feature type="binding site" evidence="1">
    <location>
        <position position="276"/>
    </location>
    <ligand>
        <name>substrate</name>
    </ligand>
</feature>
<feature type="binding site" evidence="1">
    <location>
        <position position="285"/>
    </location>
    <ligand>
        <name>substrate</name>
    </ligand>
</feature>
<feature type="mutagenesis site" description="No increase in the rate of acetylation in the presence of cAMP, presumably because of its inability to bind cAMP." evidence="3">
    <original>R</original>
    <variation>K</variation>
    <location>
        <position position="95"/>
    </location>
</feature>
<feature type="mutagenesis site" description="Shows a lower rate of acetylation of USP in the absence of cAMP than the wild-type protein, but in the presence of cAMP, an increase in the rate of acetyltransferase activity is observed." evidence="3">
    <original>E</original>
    <variation>A</variation>
    <location>
        <position position="234"/>
    </location>
</feature>
<feature type="helix" evidence="5">
    <location>
        <begin position="4"/>
        <end position="13"/>
    </location>
</feature>
<feature type="helix" evidence="5">
    <location>
        <begin position="16"/>
        <end position="18"/>
    </location>
</feature>
<feature type="helix" evidence="5">
    <location>
        <begin position="23"/>
        <end position="26"/>
    </location>
</feature>
<feature type="helix" evidence="5">
    <location>
        <begin position="27"/>
        <end position="30"/>
    </location>
</feature>
<feature type="strand" evidence="5">
    <location>
        <begin position="34"/>
        <end position="38"/>
    </location>
</feature>
<feature type="strand" evidence="5">
    <location>
        <begin position="43"/>
        <end position="45"/>
    </location>
</feature>
<feature type="strand" evidence="5">
    <location>
        <begin position="54"/>
        <end position="59"/>
    </location>
</feature>
<feature type="strand" evidence="5">
    <location>
        <begin position="62"/>
        <end position="66"/>
    </location>
</feature>
<feature type="strand" evidence="5">
    <location>
        <begin position="69"/>
        <end position="72"/>
    </location>
</feature>
<feature type="strand" evidence="6">
    <location>
        <begin position="74"/>
        <end position="78"/>
    </location>
</feature>
<feature type="strand" evidence="5">
    <location>
        <begin position="83"/>
        <end position="85"/>
    </location>
</feature>
<feature type="helix" evidence="5">
    <location>
        <begin position="86"/>
        <end position="91"/>
    </location>
</feature>
<feature type="strand" evidence="5">
    <location>
        <begin position="97"/>
        <end position="103"/>
    </location>
</feature>
<feature type="strand" evidence="5">
    <location>
        <begin position="105"/>
        <end position="110"/>
    </location>
</feature>
<feature type="helix" evidence="5">
    <location>
        <begin position="112"/>
        <end position="120"/>
    </location>
</feature>
<feature type="helix" evidence="5">
    <location>
        <begin position="124"/>
        <end position="137"/>
    </location>
</feature>
<feature type="strand" evidence="5">
    <location>
        <begin position="143"/>
        <end position="146"/>
    </location>
</feature>
<feature type="strand" evidence="5">
    <location>
        <begin position="152"/>
        <end position="157"/>
    </location>
</feature>
<feature type="helix" evidence="5">
    <location>
        <begin position="163"/>
        <end position="165"/>
    </location>
</feature>
<feature type="turn" evidence="5">
    <location>
        <begin position="181"/>
        <end position="184"/>
    </location>
</feature>
<feature type="strand" evidence="5">
    <location>
        <begin position="185"/>
        <end position="187"/>
    </location>
</feature>
<feature type="helix" evidence="5">
    <location>
        <begin position="190"/>
        <end position="198"/>
    </location>
</feature>
<feature type="strand" evidence="5">
    <location>
        <begin position="202"/>
        <end position="212"/>
    </location>
</feature>
<feature type="strand" evidence="5">
    <location>
        <begin position="217"/>
        <end position="227"/>
    </location>
</feature>
<feature type="strand" evidence="5">
    <location>
        <begin position="231"/>
        <end position="239"/>
    </location>
</feature>
<feature type="helix" evidence="5">
    <location>
        <begin position="241"/>
        <end position="243"/>
    </location>
</feature>
<feature type="turn" evidence="5">
    <location>
        <begin position="244"/>
        <end position="247"/>
    </location>
</feature>
<feature type="helix" evidence="5">
    <location>
        <begin position="248"/>
        <end position="263"/>
    </location>
</feature>
<feature type="strand" evidence="5">
    <location>
        <begin position="267"/>
        <end position="272"/>
    </location>
</feature>
<feature type="helix" evidence="5">
    <location>
        <begin position="277"/>
        <end position="284"/>
    </location>
</feature>
<feature type="turn" evidence="5">
    <location>
        <begin position="285"/>
        <end position="287"/>
    </location>
</feature>
<feature type="strand" evidence="5">
    <location>
        <begin position="298"/>
        <end position="303"/>
    </location>
</feature>
<feature type="helix" evidence="5">
    <location>
        <begin position="307"/>
        <end position="309"/>
    </location>
</feature>
<feature type="strand" evidence="5">
    <location>
        <begin position="310"/>
        <end position="312"/>
    </location>
</feature>
<feature type="helix" evidence="5">
    <location>
        <begin position="314"/>
        <end position="330"/>
    </location>
</feature>
<sequence length="333" mass="36848">MAELTEVRAADLAALEFFTGCRPSALEPLATQLRPLKAEPGQVLIRQGDPALTFMLIESGRVQVSHAVADGPPIVLDIEPGLIIGEIALLRDAPRTATVVAAEPVIGWVGDRDAFDTILHLPGMFDRLVRIARQRLAAFITPIPVQVRTGEWFYLRPVLPGDVERTLNGPVEFSSETLYRRFQSVRKPTRALLEYLFEVDYADHFVWVMTEGALGPVIADARFVREGHNATMAEVAFTVGDDYQGRGIGSFLMGALIVSANYVGVQRFNARVLTDNMAMRKIMDRLGAVWVREDLGVVMTEVDVPPVDTVPFEPELIDQIRDATRKVIRAVSQ</sequence>
<gene>
    <name type="ordered locus">MSMEG_5458</name>
    <name type="ordered locus">MSMEI_5308</name>
</gene>
<name>PAT_MYCS2</name>
<protein>
    <recommendedName>
        <fullName>Acetyltransferase Pat</fullName>
        <ecNumber>2.3.1.-</ecNumber>
    </recommendedName>
    <alternativeName>
        <fullName>GCN5-related N-acetyltransferase</fullName>
        <shortName>GNAT</shortName>
    </alternativeName>
    <alternativeName>
        <fullName>Protein acetyltransferase</fullName>
        <shortName>Pat</shortName>
    </alternativeName>
</protein>
<comment type="function">
    <text evidence="3 4">Catalyzes specifically the acetylation of the epsilon-amino group of a highly conserved lysine residue in acetyl-CoA synthetase (ACS) and of the universal stress protein (USP) MSMEG_4207. Acetylation results in the inactivation of ACS activity and could be important for mycobacteria to adjust to environmental changes.</text>
</comment>
<comment type="cofactor">
    <cofactor>
        <name>Mg(2+)</name>
        <dbReference type="ChEBI" id="CHEBI:18420"/>
    </cofactor>
</comment>
<comment type="activity regulation">
    <text evidence="3 4">Allosterically regulated by cAMP.</text>
</comment>
<comment type="biophysicochemical properties">
    <kinetics>
        <KM evidence="3 4">3.1 uM for acetyl-CoA (with ACS as substrate)</KM>
        <KM evidence="3 4">10 uM for acetyl-CoA (with USP as substrate)</KM>
        <KM evidence="3 4">10.2 uM for ACS</KM>
        <KM evidence="3 4">335 uM for USP</KM>
    </kinetics>
</comment>
<comment type="subunit">
    <text evidence="3">Homodimer.</text>
</comment>
<comment type="disruption phenotype">
    <text evidence="3">Disruption of this gene abolishes acetylation of USP.</text>
</comment>
<organism>
    <name type="scientific">Mycolicibacterium smegmatis (strain ATCC 700084 / mc(2)155)</name>
    <name type="common">Mycobacterium smegmatis</name>
    <dbReference type="NCBI Taxonomy" id="246196"/>
    <lineage>
        <taxon>Bacteria</taxon>
        <taxon>Bacillati</taxon>
        <taxon>Actinomycetota</taxon>
        <taxon>Actinomycetes</taxon>
        <taxon>Mycobacteriales</taxon>
        <taxon>Mycobacteriaceae</taxon>
        <taxon>Mycolicibacterium</taxon>
    </lineage>
</organism>
<evidence type="ECO:0000250" key="1">
    <source>
        <dbReference type="UniProtKB" id="O05581"/>
    </source>
</evidence>
<evidence type="ECO:0000255" key="2">
    <source>
        <dbReference type="PROSITE-ProRule" id="PRU00532"/>
    </source>
</evidence>
<evidence type="ECO:0000269" key="3">
    <source>
    </source>
</evidence>
<evidence type="ECO:0000269" key="4">
    <source>
    </source>
</evidence>
<evidence type="ECO:0007829" key="5">
    <source>
        <dbReference type="PDB" id="4OLL"/>
    </source>
</evidence>
<evidence type="ECO:0007829" key="6">
    <source>
        <dbReference type="PDB" id="4ORF"/>
    </source>
</evidence>
<dbReference type="EC" id="2.3.1.-"/>
<dbReference type="EMBL" id="CP000480">
    <property type="protein sequence ID" value="ABK70370.1"/>
    <property type="molecule type" value="Genomic_DNA"/>
</dbReference>
<dbReference type="EMBL" id="CP001663">
    <property type="protein sequence ID" value="AFP41750.1"/>
    <property type="molecule type" value="Genomic_DNA"/>
</dbReference>
<dbReference type="RefSeq" id="WP_003896854.1">
    <property type="nucleotide sequence ID" value="NZ_SIJM01000006.1"/>
</dbReference>
<dbReference type="RefSeq" id="YP_889697.1">
    <property type="nucleotide sequence ID" value="NC_008596.1"/>
</dbReference>
<dbReference type="PDB" id="4OLL">
    <property type="method" value="X-ray"/>
    <property type="resolution" value="1.90 A"/>
    <property type="chains" value="A=2-333"/>
</dbReference>
<dbReference type="PDB" id="4ONU">
    <property type="method" value="X-ray"/>
    <property type="resolution" value="2.25 A"/>
    <property type="chains" value="A=2-333"/>
</dbReference>
<dbReference type="PDB" id="4ORF">
    <property type="method" value="X-ray"/>
    <property type="resolution" value="2.00 A"/>
    <property type="chains" value="A=2-333"/>
</dbReference>
<dbReference type="PDBsum" id="4OLL"/>
<dbReference type="PDBsum" id="4ONU"/>
<dbReference type="PDBsum" id="4ORF"/>
<dbReference type="SMR" id="A0R3F9"/>
<dbReference type="STRING" id="246196.MSMEG_5458"/>
<dbReference type="PaxDb" id="246196-MSMEI_5308"/>
<dbReference type="KEGG" id="msb:LJ00_26975"/>
<dbReference type="KEGG" id="msg:MSMEI_5308"/>
<dbReference type="KEGG" id="msm:MSMEG_5458"/>
<dbReference type="PATRIC" id="fig|246196.19.peg.5319"/>
<dbReference type="eggNOG" id="COG0664">
    <property type="taxonomic scope" value="Bacteria"/>
</dbReference>
<dbReference type="eggNOG" id="COG1670">
    <property type="taxonomic scope" value="Bacteria"/>
</dbReference>
<dbReference type="OrthoDB" id="190266at2"/>
<dbReference type="BRENDA" id="2.3.1.B34">
    <property type="organism ID" value="3512"/>
</dbReference>
<dbReference type="SABIO-RK" id="A0R3F9"/>
<dbReference type="EvolutionaryTrace" id="A0R3F9"/>
<dbReference type="Proteomes" id="UP000000757">
    <property type="component" value="Chromosome"/>
</dbReference>
<dbReference type="Proteomes" id="UP000006158">
    <property type="component" value="Chromosome"/>
</dbReference>
<dbReference type="GO" id="GO:0005952">
    <property type="term" value="C:cAMP-dependent protein kinase complex"/>
    <property type="evidence" value="ECO:0007669"/>
    <property type="project" value="InterPro"/>
</dbReference>
<dbReference type="GO" id="GO:0005829">
    <property type="term" value="C:cytosol"/>
    <property type="evidence" value="ECO:0007669"/>
    <property type="project" value="TreeGrafter"/>
</dbReference>
<dbReference type="GO" id="GO:0046872">
    <property type="term" value="F:metal ion binding"/>
    <property type="evidence" value="ECO:0007669"/>
    <property type="project" value="UniProtKB-KW"/>
</dbReference>
<dbReference type="GO" id="GO:0008080">
    <property type="term" value="F:N-acetyltransferase activity"/>
    <property type="evidence" value="ECO:0000314"/>
    <property type="project" value="CACAO"/>
</dbReference>
<dbReference type="CDD" id="cd00038">
    <property type="entry name" value="CAP_ED"/>
    <property type="match status" value="1"/>
</dbReference>
<dbReference type="Gene3D" id="3.40.630.30">
    <property type="match status" value="1"/>
</dbReference>
<dbReference type="Gene3D" id="2.60.120.10">
    <property type="entry name" value="Jelly Rolls"/>
    <property type="match status" value="1"/>
</dbReference>
<dbReference type="InterPro" id="IPR016181">
    <property type="entry name" value="Acyl_CoA_acyltransferase"/>
</dbReference>
<dbReference type="InterPro" id="IPR050503">
    <property type="entry name" value="cAMP-dep_PK_reg_su-like"/>
</dbReference>
<dbReference type="InterPro" id="IPR018488">
    <property type="entry name" value="cNMP-bd_CS"/>
</dbReference>
<dbReference type="InterPro" id="IPR000595">
    <property type="entry name" value="cNMP-bd_dom"/>
</dbReference>
<dbReference type="InterPro" id="IPR018490">
    <property type="entry name" value="cNMP-bd_dom_sf"/>
</dbReference>
<dbReference type="InterPro" id="IPR000182">
    <property type="entry name" value="GNAT_dom"/>
</dbReference>
<dbReference type="InterPro" id="IPR014710">
    <property type="entry name" value="RmlC-like_jellyroll"/>
</dbReference>
<dbReference type="PANTHER" id="PTHR11635">
    <property type="entry name" value="CAMP-DEPENDENT PROTEIN KINASE REGULATORY CHAIN"/>
    <property type="match status" value="1"/>
</dbReference>
<dbReference type="PANTHER" id="PTHR11635:SF152">
    <property type="entry name" value="CAMP-DEPENDENT PROTEIN KINASE TYPE I REGULATORY SUBUNIT-RELATED"/>
    <property type="match status" value="1"/>
</dbReference>
<dbReference type="Pfam" id="PF13302">
    <property type="entry name" value="Acetyltransf_3"/>
    <property type="match status" value="1"/>
</dbReference>
<dbReference type="Pfam" id="PF00027">
    <property type="entry name" value="cNMP_binding"/>
    <property type="match status" value="1"/>
</dbReference>
<dbReference type="PRINTS" id="PR00103">
    <property type="entry name" value="CAMPKINASE"/>
</dbReference>
<dbReference type="SMART" id="SM00100">
    <property type="entry name" value="cNMP"/>
    <property type="match status" value="1"/>
</dbReference>
<dbReference type="SUPFAM" id="SSF55729">
    <property type="entry name" value="Acyl-CoA N-acyltransferases (Nat)"/>
    <property type="match status" value="1"/>
</dbReference>
<dbReference type="SUPFAM" id="SSF51206">
    <property type="entry name" value="cAMP-binding domain-like"/>
    <property type="match status" value="1"/>
</dbReference>
<dbReference type="PROSITE" id="PS00889">
    <property type="entry name" value="CNMP_BINDING_2"/>
    <property type="match status" value="1"/>
</dbReference>
<dbReference type="PROSITE" id="PS50042">
    <property type="entry name" value="CNMP_BINDING_3"/>
    <property type="match status" value="1"/>
</dbReference>
<dbReference type="PROSITE" id="PS51186">
    <property type="entry name" value="GNAT"/>
    <property type="match status" value="1"/>
</dbReference>
<proteinExistence type="evidence at protein level"/>
<keyword id="KW-0002">3D-structure</keyword>
<keyword id="KW-0012">Acyltransferase</keyword>
<keyword id="KW-0460">Magnesium</keyword>
<keyword id="KW-0479">Metal-binding</keyword>
<keyword id="KW-1185">Reference proteome</keyword>
<keyword id="KW-0808">Transferase</keyword>